<reference key="1">
    <citation type="submission" date="2008-08" db="EMBL/GenBank/DDBJ databases">
        <title>Complete sequence of Acidithiobacillus ferrooxidans ATCC 53993.</title>
        <authorList>
            <person name="Lucas S."/>
            <person name="Copeland A."/>
            <person name="Lapidus A."/>
            <person name="Glavina del Rio T."/>
            <person name="Dalin E."/>
            <person name="Tice H."/>
            <person name="Bruce D."/>
            <person name="Goodwin L."/>
            <person name="Pitluck S."/>
            <person name="Sims D."/>
            <person name="Brettin T."/>
            <person name="Detter J.C."/>
            <person name="Han C."/>
            <person name="Kuske C.R."/>
            <person name="Larimer F."/>
            <person name="Land M."/>
            <person name="Hauser L."/>
            <person name="Kyrpides N."/>
            <person name="Lykidis A."/>
            <person name="Borole A.P."/>
        </authorList>
    </citation>
    <scope>NUCLEOTIDE SEQUENCE [LARGE SCALE GENOMIC DNA]</scope>
    <source>
        <strain>ATCC 53993 / BNL-5-31</strain>
    </source>
</reference>
<sequence length="151" mass="17250">MFRGTHRHSLDSKGRMNVPARFRDWLNAHCDGQLVVTIDAQSQKGERCLVAYPLPTWEKVERRIAELPSNNPAARQFQRLFVGQSEELRLDAQARILLSPNLRKFAELDKELVLVGQIDKFEIWDAARWDACQETWLSGADGFACLGDLVL</sequence>
<evidence type="ECO:0000255" key="1">
    <source>
        <dbReference type="HAMAP-Rule" id="MF_01008"/>
    </source>
</evidence>
<evidence type="ECO:0000255" key="2">
    <source>
        <dbReference type="PROSITE-ProRule" id="PRU01076"/>
    </source>
</evidence>
<gene>
    <name evidence="1" type="primary">mraZ</name>
    <name type="ordered locus">Lferr_0394</name>
</gene>
<organism>
    <name type="scientific">Acidithiobacillus ferrooxidans (strain ATCC 53993 / BNL-5-31)</name>
    <name type="common">Leptospirillum ferrooxidans (ATCC 53993)</name>
    <dbReference type="NCBI Taxonomy" id="380394"/>
    <lineage>
        <taxon>Bacteria</taxon>
        <taxon>Pseudomonadati</taxon>
        <taxon>Pseudomonadota</taxon>
        <taxon>Acidithiobacillia</taxon>
        <taxon>Acidithiobacillales</taxon>
        <taxon>Acidithiobacillaceae</taxon>
        <taxon>Acidithiobacillus</taxon>
    </lineage>
</organism>
<protein>
    <recommendedName>
        <fullName>Transcriptional regulator MraZ</fullName>
    </recommendedName>
</protein>
<name>MRAZ_ACIF5</name>
<accession>B5ELD2</accession>
<keyword id="KW-0963">Cytoplasm</keyword>
<keyword id="KW-0238">DNA-binding</keyword>
<keyword id="KW-0677">Repeat</keyword>
<keyword id="KW-0804">Transcription</keyword>
<keyword id="KW-0805">Transcription regulation</keyword>
<comment type="subunit">
    <text evidence="1">Forms oligomers.</text>
</comment>
<comment type="subcellular location">
    <subcellularLocation>
        <location evidence="1">Cytoplasm</location>
        <location evidence="1">Nucleoid</location>
    </subcellularLocation>
</comment>
<comment type="similarity">
    <text evidence="1">Belongs to the MraZ family.</text>
</comment>
<feature type="chain" id="PRO_1000134767" description="Transcriptional regulator MraZ">
    <location>
        <begin position="1"/>
        <end position="151"/>
    </location>
</feature>
<feature type="domain" description="SpoVT-AbrB 1" evidence="2">
    <location>
        <begin position="5"/>
        <end position="56"/>
    </location>
</feature>
<feature type="domain" description="SpoVT-AbrB 2" evidence="2">
    <location>
        <begin position="85"/>
        <end position="128"/>
    </location>
</feature>
<proteinExistence type="inferred from homology"/>
<dbReference type="EMBL" id="CP001132">
    <property type="protein sequence ID" value="ACH82648.1"/>
    <property type="molecule type" value="Genomic_DNA"/>
</dbReference>
<dbReference type="RefSeq" id="WP_012536023.1">
    <property type="nucleotide sequence ID" value="NC_011206.1"/>
</dbReference>
<dbReference type="SMR" id="B5ELD2"/>
<dbReference type="GeneID" id="65279600"/>
<dbReference type="KEGG" id="afe:Lferr_0394"/>
<dbReference type="eggNOG" id="COG2001">
    <property type="taxonomic scope" value="Bacteria"/>
</dbReference>
<dbReference type="HOGENOM" id="CLU_107907_2_0_6"/>
<dbReference type="GO" id="GO:0005737">
    <property type="term" value="C:cytoplasm"/>
    <property type="evidence" value="ECO:0007669"/>
    <property type="project" value="UniProtKB-UniRule"/>
</dbReference>
<dbReference type="GO" id="GO:0009295">
    <property type="term" value="C:nucleoid"/>
    <property type="evidence" value="ECO:0007669"/>
    <property type="project" value="UniProtKB-SubCell"/>
</dbReference>
<dbReference type="GO" id="GO:0003700">
    <property type="term" value="F:DNA-binding transcription factor activity"/>
    <property type="evidence" value="ECO:0007669"/>
    <property type="project" value="UniProtKB-UniRule"/>
</dbReference>
<dbReference type="GO" id="GO:0000976">
    <property type="term" value="F:transcription cis-regulatory region binding"/>
    <property type="evidence" value="ECO:0007669"/>
    <property type="project" value="TreeGrafter"/>
</dbReference>
<dbReference type="GO" id="GO:2000143">
    <property type="term" value="P:negative regulation of DNA-templated transcription initiation"/>
    <property type="evidence" value="ECO:0007669"/>
    <property type="project" value="TreeGrafter"/>
</dbReference>
<dbReference type="CDD" id="cd16321">
    <property type="entry name" value="MraZ_C"/>
    <property type="match status" value="1"/>
</dbReference>
<dbReference type="CDD" id="cd16320">
    <property type="entry name" value="MraZ_N"/>
    <property type="match status" value="1"/>
</dbReference>
<dbReference type="Gene3D" id="3.40.1550.20">
    <property type="entry name" value="Transcriptional regulator MraZ domain"/>
    <property type="match status" value="1"/>
</dbReference>
<dbReference type="HAMAP" id="MF_01008">
    <property type="entry name" value="MraZ"/>
    <property type="match status" value="1"/>
</dbReference>
<dbReference type="InterPro" id="IPR003444">
    <property type="entry name" value="MraZ"/>
</dbReference>
<dbReference type="InterPro" id="IPR035644">
    <property type="entry name" value="MraZ_C"/>
</dbReference>
<dbReference type="InterPro" id="IPR020603">
    <property type="entry name" value="MraZ_dom"/>
</dbReference>
<dbReference type="InterPro" id="IPR035642">
    <property type="entry name" value="MraZ_N"/>
</dbReference>
<dbReference type="InterPro" id="IPR038619">
    <property type="entry name" value="MraZ_sf"/>
</dbReference>
<dbReference type="InterPro" id="IPR007159">
    <property type="entry name" value="SpoVT-AbrB_dom"/>
</dbReference>
<dbReference type="InterPro" id="IPR037914">
    <property type="entry name" value="SpoVT-AbrB_sf"/>
</dbReference>
<dbReference type="NCBIfam" id="TIGR00242">
    <property type="entry name" value="division/cell wall cluster transcriptional repressor MraZ"/>
    <property type="match status" value="1"/>
</dbReference>
<dbReference type="PANTHER" id="PTHR34701">
    <property type="entry name" value="TRANSCRIPTIONAL REGULATOR MRAZ"/>
    <property type="match status" value="1"/>
</dbReference>
<dbReference type="PANTHER" id="PTHR34701:SF1">
    <property type="entry name" value="TRANSCRIPTIONAL REGULATOR MRAZ"/>
    <property type="match status" value="1"/>
</dbReference>
<dbReference type="Pfam" id="PF02381">
    <property type="entry name" value="MraZ"/>
    <property type="match status" value="2"/>
</dbReference>
<dbReference type="SUPFAM" id="SSF89447">
    <property type="entry name" value="AbrB/MazE/MraZ-like"/>
    <property type="match status" value="1"/>
</dbReference>
<dbReference type="PROSITE" id="PS51740">
    <property type="entry name" value="SPOVT_ABRB"/>
    <property type="match status" value="2"/>
</dbReference>